<dbReference type="EMBL" id="AK132375">
    <property type="protein sequence ID" value="BAE21134.1"/>
    <property type="molecule type" value="mRNA"/>
</dbReference>
<dbReference type="EMBL" id="BC042764">
    <property type="protein sequence ID" value="AAH42764.1"/>
    <property type="molecule type" value="mRNA"/>
</dbReference>
<dbReference type="EMBL" id="BC051083">
    <property type="protein sequence ID" value="AAH51083.1"/>
    <property type="status" value="ALT_INIT"/>
    <property type="molecule type" value="mRNA"/>
</dbReference>
<dbReference type="CCDS" id="CCDS51000.1"/>
<dbReference type="RefSeq" id="NP_852074.2">
    <property type="nucleotide sequence ID" value="NM_181409.3"/>
</dbReference>
<dbReference type="SMR" id="Q3V1L6"/>
<dbReference type="FunCoup" id="Q3V1L6">
    <property type="interactions" value="451"/>
</dbReference>
<dbReference type="STRING" id="10090.ENSMUSP00000062341"/>
<dbReference type="iPTMnet" id="Q3V1L6"/>
<dbReference type="PhosphoSitePlus" id="Q3V1L6"/>
<dbReference type="PaxDb" id="10090-ENSMUSP00000062341"/>
<dbReference type="ProteomicsDB" id="286079"/>
<dbReference type="Antibodypedia" id="34015">
    <property type="antibodies" value="45 antibodies from 12 providers"/>
</dbReference>
<dbReference type="DNASU" id="194126"/>
<dbReference type="Ensembl" id="ENSMUST00000054356.16">
    <property type="protein sequence ID" value="ENSMUSP00000062341.10"/>
    <property type="gene ID" value="ENSMUSG00000045934.16"/>
</dbReference>
<dbReference type="GeneID" id="194126"/>
<dbReference type="KEGG" id="mmu:194126"/>
<dbReference type="UCSC" id="uc008qmd.2">
    <property type="organism name" value="mouse"/>
</dbReference>
<dbReference type="AGR" id="MGI:2652817"/>
<dbReference type="CTD" id="10903"/>
<dbReference type="MGI" id="MGI:2652817">
    <property type="gene designation" value="Mtmr11"/>
</dbReference>
<dbReference type="VEuPathDB" id="HostDB:ENSMUSG00000045934"/>
<dbReference type="eggNOG" id="KOG4471">
    <property type="taxonomic scope" value="Eukaryota"/>
</dbReference>
<dbReference type="GeneTree" id="ENSGT00940000160276"/>
<dbReference type="HOGENOM" id="CLU_021912_1_0_1"/>
<dbReference type="InParanoid" id="Q3V1L6"/>
<dbReference type="OMA" id="GWQRSQD"/>
<dbReference type="OrthoDB" id="271628at2759"/>
<dbReference type="PhylomeDB" id="Q3V1L6"/>
<dbReference type="TreeFam" id="TF315197"/>
<dbReference type="BioGRID-ORCS" id="194126">
    <property type="hits" value="2 hits in 81 CRISPR screens"/>
</dbReference>
<dbReference type="ChiTaRS" id="Mtmr11">
    <property type="organism name" value="mouse"/>
</dbReference>
<dbReference type="PRO" id="PR:Q3V1L6"/>
<dbReference type="Proteomes" id="UP000000589">
    <property type="component" value="Chromosome 3"/>
</dbReference>
<dbReference type="RNAct" id="Q3V1L6">
    <property type="molecule type" value="protein"/>
</dbReference>
<dbReference type="Bgee" id="ENSMUSG00000045934">
    <property type="expression patterns" value="Expressed in metanephric proximal tubule and 137 other cell types or tissues"/>
</dbReference>
<dbReference type="ExpressionAtlas" id="Q3V1L6">
    <property type="expression patterns" value="baseline and differential"/>
</dbReference>
<dbReference type="GO" id="GO:0005737">
    <property type="term" value="C:cytoplasm"/>
    <property type="evidence" value="ECO:0007669"/>
    <property type="project" value="Ensembl"/>
</dbReference>
<dbReference type="InterPro" id="IPR022587">
    <property type="entry name" value="MTMR12-like_C"/>
</dbReference>
<dbReference type="InterPro" id="IPR030564">
    <property type="entry name" value="Myotubularin"/>
</dbReference>
<dbReference type="InterPro" id="IPR010569">
    <property type="entry name" value="Myotubularin-like_Pase_dom"/>
</dbReference>
<dbReference type="InterPro" id="IPR029021">
    <property type="entry name" value="Prot-tyrosine_phosphatase-like"/>
</dbReference>
<dbReference type="PANTHER" id="PTHR10807">
    <property type="entry name" value="MYOTUBULARIN-RELATED"/>
    <property type="match status" value="1"/>
</dbReference>
<dbReference type="PANTHER" id="PTHR10807:SF51">
    <property type="entry name" value="MYOTUBULARIN-RELATED PROTEIN 11"/>
    <property type="match status" value="1"/>
</dbReference>
<dbReference type="Pfam" id="PF12578">
    <property type="entry name" value="3-PAP"/>
    <property type="match status" value="1"/>
</dbReference>
<dbReference type="Pfam" id="PF06602">
    <property type="entry name" value="Myotub-related"/>
    <property type="match status" value="2"/>
</dbReference>
<dbReference type="SUPFAM" id="SSF52799">
    <property type="entry name" value="(Phosphotyrosine protein) phosphatases II"/>
    <property type="match status" value="1"/>
</dbReference>
<dbReference type="SUPFAM" id="SSF50729">
    <property type="entry name" value="PH domain-like"/>
    <property type="match status" value="1"/>
</dbReference>
<dbReference type="PROSITE" id="PS51339">
    <property type="entry name" value="PPASE_MYOTUBULARIN"/>
    <property type="match status" value="1"/>
</dbReference>
<protein>
    <recommendedName>
        <fullName>Myotubularin-related protein 11</fullName>
    </recommendedName>
    <alternativeName>
        <fullName evidence="3">Inactive phosphatidylinositol 3-phosphatase 11</fullName>
    </alternativeName>
</protein>
<reference key="1">
    <citation type="journal article" date="2005" name="Science">
        <title>The transcriptional landscape of the mammalian genome.</title>
        <authorList>
            <person name="Carninci P."/>
            <person name="Kasukawa T."/>
            <person name="Katayama S."/>
            <person name="Gough J."/>
            <person name="Frith M.C."/>
            <person name="Maeda N."/>
            <person name="Oyama R."/>
            <person name="Ravasi T."/>
            <person name="Lenhard B."/>
            <person name="Wells C."/>
            <person name="Kodzius R."/>
            <person name="Shimokawa K."/>
            <person name="Bajic V.B."/>
            <person name="Brenner S.E."/>
            <person name="Batalov S."/>
            <person name="Forrest A.R."/>
            <person name="Zavolan M."/>
            <person name="Davis M.J."/>
            <person name="Wilming L.G."/>
            <person name="Aidinis V."/>
            <person name="Allen J.E."/>
            <person name="Ambesi-Impiombato A."/>
            <person name="Apweiler R."/>
            <person name="Aturaliya R.N."/>
            <person name="Bailey T.L."/>
            <person name="Bansal M."/>
            <person name="Baxter L."/>
            <person name="Beisel K.W."/>
            <person name="Bersano T."/>
            <person name="Bono H."/>
            <person name="Chalk A.M."/>
            <person name="Chiu K.P."/>
            <person name="Choudhary V."/>
            <person name="Christoffels A."/>
            <person name="Clutterbuck D.R."/>
            <person name="Crowe M.L."/>
            <person name="Dalla E."/>
            <person name="Dalrymple B.P."/>
            <person name="de Bono B."/>
            <person name="Della Gatta G."/>
            <person name="di Bernardo D."/>
            <person name="Down T."/>
            <person name="Engstrom P."/>
            <person name="Fagiolini M."/>
            <person name="Faulkner G."/>
            <person name="Fletcher C.F."/>
            <person name="Fukushima T."/>
            <person name="Furuno M."/>
            <person name="Futaki S."/>
            <person name="Gariboldi M."/>
            <person name="Georgii-Hemming P."/>
            <person name="Gingeras T.R."/>
            <person name="Gojobori T."/>
            <person name="Green R.E."/>
            <person name="Gustincich S."/>
            <person name="Harbers M."/>
            <person name="Hayashi Y."/>
            <person name="Hensch T.K."/>
            <person name="Hirokawa N."/>
            <person name="Hill D."/>
            <person name="Huminiecki L."/>
            <person name="Iacono M."/>
            <person name="Ikeo K."/>
            <person name="Iwama A."/>
            <person name="Ishikawa T."/>
            <person name="Jakt M."/>
            <person name="Kanapin A."/>
            <person name="Katoh M."/>
            <person name="Kawasawa Y."/>
            <person name="Kelso J."/>
            <person name="Kitamura H."/>
            <person name="Kitano H."/>
            <person name="Kollias G."/>
            <person name="Krishnan S.P."/>
            <person name="Kruger A."/>
            <person name="Kummerfeld S.K."/>
            <person name="Kurochkin I.V."/>
            <person name="Lareau L.F."/>
            <person name="Lazarevic D."/>
            <person name="Lipovich L."/>
            <person name="Liu J."/>
            <person name="Liuni S."/>
            <person name="McWilliam S."/>
            <person name="Madan Babu M."/>
            <person name="Madera M."/>
            <person name="Marchionni L."/>
            <person name="Matsuda H."/>
            <person name="Matsuzawa S."/>
            <person name="Miki H."/>
            <person name="Mignone F."/>
            <person name="Miyake S."/>
            <person name="Morris K."/>
            <person name="Mottagui-Tabar S."/>
            <person name="Mulder N."/>
            <person name="Nakano N."/>
            <person name="Nakauchi H."/>
            <person name="Ng P."/>
            <person name="Nilsson R."/>
            <person name="Nishiguchi S."/>
            <person name="Nishikawa S."/>
            <person name="Nori F."/>
            <person name="Ohara O."/>
            <person name="Okazaki Y."/>
            <person name="Orlando V."/>
            <person name="Pang K.C."/>
            <person name="Pavan W.J."/>
            <person name="Pavesi G."/>
            <person name="Pesole G."/>
            <person name="Petrovsky N."/>
            <person name="Piazza S."/>
            <person name="Reed J."/>
            <person name="Reid J.F."/>
            <person name="Ring B.Z."/>
            <person name="Ringwald M."/>
            <person name="Rost B."/>
            <person name="Ruan Y."/>
            <person name="Salzberg S.L."/>
            <person name="Sandelin A."/>
            <person name="Schneider C."/>
            <person name="Schoenbach C."/>
            <person name="Sekiguchi K."/>
            <person name="Semple C.A."/>
            <person name="Seno S."/>
            <person name="Sessa L."/>
            <person name="Sheng Y."/>
            <person name="Shibata Y."/>
            <person name="Shimada H."/>
            <person name="Shimada K."/>
            <person name="Silva D."/>
            <person name="Sinclair B."/>
            <person name="Sperling S."/>
            <person name="Stupka E."/>
            <person name="Sugiura K."/>
            <person name="Sultana R."/>
            <person name="Takenaka Y."/>
            <person name="Taki K."/>
            <person name="Tammoja K."/>
            <person name="Tan S.L."/>
            <person name="Tang S."/>
            <person name="Taylor M.S."/>
            <person name="Tegner J."/>
            <person name="Teichmann S.A."/>
            <person name="Ueda H.R."/>
            <person name="van Nimwegen E."/>
            <person name="Verardo R."/>
            <person name="Wei C.L."/>
            <person name="Yagi K."/>
            <person name="Yamanishi H."/>
            <person name="Zabarovsky E."/>
            <person name="Zhu S."/>
            <person name="Zimmer A."/>
            <person name="Hide W."/>
            <person name="Bult C."/>
            <person name="Grimmond S.M."/>
            <person name="Teasdale R.D."/>
            <person name="Liu E.T."/>
            <person name="Brusic V."/>
            <person name="Quackenbush J."/>
            <person name="Wahlestedt C."/>
            <person name="Mattick J.S."/>
            <person name="Hume D.A."/>
            <person name="Kai C."/>
            <person name="Sasaki D."/>
            <person name="Tomaru Y."/>
            <person name="Fukuda S."/>
            <person name="Kanamori-Katayama M."/>
            <person name="Suzuki M."/>
            <person name="Aoki J."/>
            <person name="Arakawa T."/>
            <person name="Iida J."/>
            <person name="Imamura K."/>
            <person name="Itoh M."/>
            <person name="Kato T."/>
            <person name="Kawaji H."/>
            <person name="Kawagashira N."/>
            <person name="Kawashima T."/>
            <person name="Kojima M."/>
            <person name="Kondo S."/>
            <person name="Konno H."/>
            <person name="Nakano K."/>
            <person name="Ninomiya N."/>
            <person name="Nishio T."/>
            <person name="Okada M."/>
            <person name="Plessy C."/>
            <person name="Shibata K."/>
            <person name="Shiraki T."/>
            <person name="Suzuki S."/>
            <person name="Tagami M."/>
            <person name="Waki K."/>
            <person name="Watahiki A."/>
            <person name="Okamura-Oho Y."/>
            <person name="Suzuki H."/>
            <person name="Kawai J."/>
            <person name="Hayashizaki Y."/>
        </authorList>
    </citation>
    <scope>NUCLEOTIDE SEQUENCE [LARGE SCALE MRNA]</scope>
    <source>
        <strain>C57BL/6J</strain>
        <tissue>Head</tissue>
    </source>
</reference>
<reference key="2">
    <citation type="journal article" date="2004" name="Genome Res.">
        <title>The status, quality, and expansion of the NIH full-length cDNA project: the Mammalian Gene Collection (MGC).</title>
        <authorList>
            <consortium name="The MGC Project Team"/>
        </authorList>
    </citation>
    <scope>NUCLEOTIDE SEQUENCE [LARGE SCALE MRNA]</scope>
    <source>
        <strain>FVB/N-3</strain>
        <tissue>Mammary tumor</tissue>
    </source>
</reference>
<keyword id="KW-1185">Reference proteome</keyword>
<proteinExistence type="evidence at transcript level"/>
<organism>
    <name type="scientific">Mus musculus</name>
    <name type="common">Mouse</name>
    <dbReference type="NCBI Taxonomy" id="10090"/>
    <lineage>
        <taxon>Eukaryota</taxon>
        <taxon>Metazoa</taxon>
        <taxon>Chordata</taxon>
        <taxon>Craniata</taxon>
        <taxon>Vertebrata</taxon>
        <taxon>Euteleostomi</taxon>
        <taxon>Mammalia</taxon>
        <taxon>Eutheria</taxon>
        <taxon>Euarchontoglires</taxon>
        <taxon>Glires</taxon>
        <taxon>Rodentia</taxon>
        <taxon>Myomorpha</taxon>
        <taxon>Muroidea</taxon>
        <taxon>Muridae</taxon>
        <taxon>Murinae</taxon>
        <taxon>Mus</taxon>
        <taxon>Mus</taxon>
    </lineage>
</organism>
<comment type="similarity">
    <text evidence="3">Belongs to the protein-tyrosine phosphatase family. Non-receptor class myotubularin subfamily.</text>
</comment>
<comment type="caution">
    <text evidence="3">Although it belongs to the non-receptor class myotubularin subfamily, lacks the conserved active site cysteine residue at position 380 in the dsPTPase catalytic loop, suggesting that it has no phosphatase activity.</text>
</comment>
<comment type="sequence caution" evidence="3">
    <conflict type="erroneous initiation">
        <sequence resource="EMBL-CDS" id="AAH51083"/>
    </conflict>
</comment>
<feature type="chain" id="PRO_0000337099" description="Myotubularin-related protein 11">
    <location>
        <begin position="1"/>
        <end position="700"/>
    </location>
</feature>
<feature type="domain" description="Myotubularin phosphatase" evidence="1">
    <location>
        <begin position="201"/>
        <end position="644"/>
    </location>
</feature>
<feature type="region of interest" description="Disordered" evidence="2">
    <location>
        <begin position="1"/>
        <end position="39"/>
    </location>
</feature>
<accession>Q3V1L6</accession>
<accession>Q80UV0</accession>
<accession>Q8CG88</accession>
<sequence>MWWGGRGQSFNIAPQKEEPEMGLSGPKSNPGNRMPEPSSHQLGSCLASGCLPGEHILAWAPGRRKGPGLDLPGTLICTNFRVTFQPCGWQRKQDTPLSSENDFALINIGRLEAVSGLSRVQLLRPGSQLKFIPEELLLHGRDFRLLRVGFEAGGLAPQAFQVTMAIIQARAQSSQVQQYRGITLSKVGKVSGSRKPPIPLLETLEDWETECKKQGARGWRVSTVNERFDVATSLSGYFWVPNRILDSEVRRAFAHFHQGRGPRLSWHHPGGSDLLRCGGFYIASDPNKEDIRAVESMLQAGHSDVVLVETMDEMPSLADIQLAHLKLRALCLPDSSVAEDKWLSALEGTRWLDYVRSCLRKASDISVLVTSRVRSVVLQELGDRDFNGLLSSLVQLLLAPEARTLFGFQSLVQREWVAAGHPFLTRLGDTGASEEAPVFPLFLDCAWQLLQQFPAEFEFSEFFLLALHDSIRVPDTLTFLRNTPWERGKKSGQFNSYTQVYTPEYSQPLAGSSANLHLSVWDWDLRYSKEQISQFLNPGYDPEHCPDSRFSRQQQSLMVPGPPSSMWLFSRGTLTPLNQLCPWQDSSSLLAVSSHWLPRPARSSESLADQEWGLPSHWGACPLPPGLLLPGYLGPQIRFWKRCYLRGRPEVQMGSSALTVSALQDELSHLQELLRQWTPRISPEDQSKKRDPNTILSQIC</sequence>
<evidence type="ECO:0000255" key="1">
    <source>
        <dbReference type="PROSITE-ProRule" id="PRU00669"/>
    </source>
</evidence>
<evidence type="ECO:0000256" key="2">
    <source>
        <dbReference type="SAM" id="MobiDB-lite"/>
    </source>
</evidence>
<evidence type="ECO:0000305" key="3"/>
<gene>
    <name type="primary">Mtmr11</name>
</gene>
<name>MTMRB_MOUSE</name>